<comment type="function">
    <text evidence="1">Plays a role in maintaining the mitochondrial genome. May have a dispensable role in early maturation of pre-rRNA (By similarity).</text>
</comment>
<comment type="subcellular location">
    <subcellularLocation>
        <location evidence="1">Mitochondrion inner membrane</location>
        <topology evidence="1">Single-pass membrane protein</topology>
    </subcellularLocation>
</comment>
<comment type="similarity">
    <text evidence="4">Belongs to the YME2 family.</text>
</comment>
<keyword id="KW-0175">Coiled coil</keyword>
<keyword id="KW-0472">Membrane</keyword>
<keyword id="KW-0496">Mitochondrion</keyword>
<keyword id="KW-0999">Mitochondrion inner membrane</keyword>
<keyword id="KW-0507">mRNA processing</keyword>
<keyword id="KW-1185">Reference proteome</keyword>
<keyword id="KW-0694">RNA-binding</keyword>
<keyword id="KW-0812">Transmembrane</keyword>
<keyword id="KW-1133">Transmembrane helix</keyword>
<organism>
    <name type="scientific">Dictyostelium discoideum</name>
    <name type="common">Social amoeba</name>
    <dbReference type="NCBI Taxonomy" id="44689"/>
    <lineage>
        <taxon>Eukaryota</taxon>
        <taxon>Amoebozoa</taxon>
        <taxon>Evosea</taxon>
        <taxon>Eumycetozoa</taxon>
        <taxon>Dictyostelia</taxon>
        <taxon>Dictyosteliales</taxon>
        <taxon>Dictyosteliaceae</taxon>
        <taxon>Dictyostelium</taxon>
    </lineage>
</organism>
<gene>
    <name type="primary">yme2</name>
    <name type="ORF">DDB_G0287621</name>
</gene>
<proteinExistence type="inferred from homology"/>
<evidence type="ECO:0000250" key="1"/>
<evidence type="ECO:0000255" key="2"/>
<evidence type="ECO:0000256" key="3">
    <source>
        <dbReference type="SAM" id="MobiDB-lite"/>
    </source>
</evidence>
<evidence type="ECO:0000305" key="4"/>
<name>YME2_DICDI</name>
<feature type="chain" id="PRO_0000343122" description="Mitochondrial escape protein 2 homolog">
    <location>
        <begin position="1"/>
        <end position="878"/>
    </location>
</feature>
<feature type="topological domain" description="Mitochondrial matrix" evidence="2">
    <location>
        <begin position="1"/>
        <end position="338"/>
    </location>
</feature>
<feature type="transmembrane region" description="Helical" evidence="2">
    <location>
        <begin position="339"/>
        <end position="359"/>
    </location>
</feature>
<feature type="topological domain" description="Mitochondrial intermembrane" evidence="2">
    <location>
        <begin position="360"/>
        <end position="878"/>
    </location>
</feature>
<feature type="domain" description="RRM">
    <location>
        <begin position="229"/>
        <end position="323"/>
    </location>
</feature>
<feature type="region of interest" description="Disordered" evidence="3">
    <location>
        <begin position="99"/>
        <end position="120"/>
    </location>
</feature>
<feature type="coiled-coil region" evidence="2">
    <location>
        <begin position="761"/>
        <end position="873"/>
    </location>
</feature>
<protein>
    <recommendedName>
        <fullName>Mitochondrial escape protein 2 homolog</fullName>
    </recommendedName>
</protein>
<sequence length="878" mass="101257">MASPSSRLLKFITNGSKLHSAKNNNMIKNKNIISPTITKLFSTSKISNEIGNIRNFNNKISTNLINSNINTKPFFEIPKLFEKKYYSYIPPTWEEKDKEKQFNSITSTREEGGDNEESNRMGNGSIKDAIVWVNHLYPIKVSRLDFRSLFFHIPITKKLNSLFPNDVKIISIEKRIKEGGAYIHFQYDSSNPEYKSIEMVMSKLKSIFAQEKKHFHFASRPAKCKLVYGRPFVEDIDYRFPSTTLKITFKGSEMSPDDLFRLMRPYGHIKDIHYSSPIPSKDGPRQATITFKRMEGAIATRNCLHNKYFPEFNTSLYMDYEQLMRINKLKEQFSKHPKIMIPLLGILATLLTLLLFNPLREYFINKKLSSPCYFGEQEEDDWQERSEQKVLQTHFNFPPNSIVMISAPKGSGKSSLIDKVLENRINTLLIDCNQEVNNNDEEFIESFSKDIGFSPSYSLYSSFGSVIDAIIPTGKGAFHSTTNYQMQTILKLLDEVLAKKAKQFPVDPHQPYEYPLIVIDGFFGMIQAMESKEKANIIMDSVIQWAITSTQRGHAHVVFLSSDSFAGDIIKKYLDNRGGGQISTIQLGDVQPSMAINYIKKRIGPNTPITQHDMELVVDNLGGRYYDLNVLSQRMIAGDSVERALSNMISKAVSEIRAEGFGLSKRNDDSKIGGTKLKWSRPQLWETIKKIAENDFVSYDDLLFNVFLGDESSLNNLISSNLLRFQNVDNERKVTAYSPLYCSAFKQMVNDLEFNVGMDVLVQKARIEEELSKLSKVEDELLKIKNLTSKSWFEPLSIKKRRILLEDKLKDHVAKIEHRENILKKHSLFQKFLREEQMIQMELIKKQREQSKFERQQQQLLQQQQLQQQQQQQQQGSI</sequence>
<reference key="1">
    <citation type="journal article" date="2005" name="Nature">
        <title>The genome of the social amoeba Dictyostelium discoideum.</title>
        <authorList>
            <person name="Eichinger L."/>
            <person name="Pachebat J.A."/>
            <person name="Gloeckner G."/>
            <person name="Rajandream M.A."/>
            <person name="Sucgang R."/>
            <person name="Berriman M."/>
            <person name="Song J."/>
            <person name="Olsen R."/>
            <person name="Szafranski K."/>
            <person name="Xu Q."/>
            <person name="Tunggal B."/>
            <person name="Kummerfeld S."/>
            <person name="Madera M."/>
            <person name="Konfortov B.A."/>
            <person name="Rivero F."/>
            <person name="Bankier A.T."/>
            <person name="Lehmann R."/>
            <person name="Hamlin N."/>
            <person name="Davies R."/>
            <person name="Gaudet P."/>
            <person name="Fey P."/>
            <person name="Pilcher K."/>
            <person name="Chen G."/>
            <person name="Saunders D."/>
            <person name="Sodergren E.J."/>
            <person name="Davis P."/>
            <person name="Kerhornou A."/>
            <person name="Nie X."/>
            <person name="Hall N."/>
            <person name="Anjard C."/>
            <person name="Hemphill L."/>
            <person name="Bason N."/>
            <person name="Farbrother P."/>
            <person name="Desany B."/>
            <person name="Just E."/>
            <person name="Morio T."/>
            <person name="Rost R."/>
            <person name="Churcher C.M."/>
            <person name="Cooper J."/>
            <person name="Haydock S."/>
            <person name="van Driessche N."/>
            <person name="Cronin A."/>
            <person name="Goodhead I."/>
            <person name="Muzny D.M."/>
            <person name="Mourier T."/>
            <person name="Pain A."/>
            <person name="Lu M."/>
            <person name="Harper D."/>
            <person name="Lindsay R."/>
            <person name="Hauser H."/>
            <person name="James K.D."/>
            <person name="Quiles M."/>
            <person name="Madan Babu M."/>
            <person name="Saito T."/>
            <person name="Buchrieser C."/>
            <person name="Wardroper A."/>
            <person name="Felder M."/>
            <person name="Thangavelu M."/>
            <person name="Johnson D."/>
            <person name="Knights A."/>
            <person name="Loulseged H."/>
            <person name="Mungall K.L."/>
            <person name="Oliver K."/>
            <person name="Price C."/>
            <person name="Quail M.A."/>
            <person name="Urushihara H."/>
            <person name="Hernandez J."/>
            <person name="Rabbinowitsch E."/>
            <person name="Steffen D."/>
            <person name="Sanders M."/>
            <person name="Ma J."/>
            <person name="Kohara Y."/>
            <person name="Sharp S."/>
            <person name="Simmonds M.N."/>
            <person name="Spiegler S."/>
            <person name="Tivey A."/>
            <person name="Sugano S."/>
            <person name="White B."/>
            <person name="Walker D."/>
            <person name="Woodward J.R."/>
            <person name="Winckler T."/>
            <person name="Tanaka Y."/>
            <person name="Shaulsky G."/>
            <person name="Schleicher M."/>
            <person name="Weinstock G.M."/>
            <person name="Rosenthal A."/>
            <person name="Cox E.C."/>
            <person name="Chisholm R.L."/>
            <person name="Gibbs R.A."/>
            <person name="Loomis W.F."/>
            <person name="Platzer M."/>
            <person name="Kay R.R."/>
            <person name="Williams J.G."/>
            <person name="Dear P.H."/>
            <person name="Noegel A.A."/>
            <person name="Barrell B.G."/>
            <person name="Kuspa A."/>
        </authorList>
    </citation>
    <scope>NUCLEOTIDE SEQUENCE [LARGE SCALE GENOMIC DNA]</scope>
    <source>
        <strain>AX4</strain>
    </source>
</reference>
<accession>Q54K38</accession>
<dbReference type="EMBL" id="AAFI02000103">
    <property type="protein sequence ID" value="EAL63619.1"/>
    <property type="molecule type" value="Genomic_DNA"/>
</dbReference>
<dbReference type="RefSeq" id="XP_637126.1">
    <property type="nucleotide sequence ID" value="XM_632034.1"/>
</dbReference>
<dbReference type="FunCoup" id="Q54K38">
    <property type="interactions" value="5"/>
</dbReference>
<dbReference type="STRING" id="44689.Q54K38"/>
<dbReference type="PaxDb" id="44689-DDB0187555"/>
<dbReference type="EnsemblProtists" id="EAL63619">
    <property type="protein sequence ID" value="EAL63619"/>
    <property type="gene ID" value="DDB_G0287621"/>
</dbReference>
<dbReference type="GeneID" id="8626221"/>
<dbReference type="KEGG" id="ddi:DDB_G0287621"/>
<dbReference type="dictyBase" id="DDB_G0287621"/>
<dbReference type="VEuPathDB" id="AmoebaDB:DDB_G0287621"/>
<dbReference type="eggNOG" id="ENOG502QS0P">
    <property type="taxonomic scope" value="Eukaryota"/>
</dbReference>
<dbReference type="HOGENOM" id="CLU_327739_0_0_1"/>
<dbReference type="InParanoid" id="Q54K38"/>
<dbReference type="OMA" id="WTPEQAW"/>
<dbReference type="PhylomeDB" id="Q54K38"/>
<dbReference type="PRO" id="PR:Q54K38"/>
<dbReference type="Proteomes" id="UP000002195">
    <property type="component" value="Chromosome 5"/>
</dbReference>
<dbReference type="GO" id="GO:0005743">
    <property type="term" value="C:mitochondrial inner membrane"/>
    <property type="evidence" value="ECO:0000318"/>
    <property type="project" value="GO_Central"/>
</dbReference>
<dbReference type="GO" id="GO:0003723">
    <property type="term" value="F:RNA binding"/>
    <property type="evidence" value="ECO:0007669"/>
    <property type="project" value="UniProtKB-KW"/>
</dbReference>
<dbReference type="GO" id="GO:0000002">
    <property type="term" value="P:mitochondrial genome maintenance"/>
    <property type="evidence" value="ECO:0000318"/>
    <property type="project" value="GO_Central"/>
</dbReference>
<dbReference type="GO" id="GO:0006397">
    <property type="term" value="P:mRNA processing"/>
    <property type="evidence" value="ECO:0007669"/>
    <property type="project" value="UniProtKB-KW"/>
</dbReference>
<dbReference type="CDD" id="cd12433">
    <property type="entry name" value="RRM_Yme2p_like"/>
    <property type="match status" value="1"/>
</dbReference>
<dbReference type="Gene3D" id="3.40.50.300">
    <property type="entry name" value="P-loop containing nucleotide triphosphate hydrolases"/>
    <property type="match status" value="1"/>
</dbReference>
<dbReference type="InterPro" id="IPR018850">
    <property type="entry name" value="Mt_escape_2_C"/>
</dbReference>
<dbReference type="InterPro" id="IPR027417">
    <property type="entry name" value="P-loop_NTPase"/>
</dbReference>
<dbReference type="InterPro" id="IPR035979">
    <property type="entry name" value="RBD_domain_sf"/>
</dbReference>
<dbReference type="InterPro" id="IPR039627">
    <property type="entry name" value="Yme2_C"/>
</dbReference>
<dbReference type="InterPro" id="IPR034260">
    <property type="entry name" value="Yme2_RRM"/>
</dbReference>
<dbReference type="PANTHER" id="PTHR32198">
    <property type="entry name" value="MITOCHONDRIAL ESCAPE PROTEIN 2"/>
    <property type="match status" value="1"/>
</dbReference>
<dbReference type="PANTHER" id="PTHR32198:SF2">
    <property type="entry name" value="MITOCHONDRIAL ESCAPE PROTEIN 2"/>
    <property type="match status" value="1"/>
</dbReference>
<dbReference type="Pfam" id="PF10443">
    <property type="entry name" value="RNA12"/>
    <property type="match status" value="1"/>
</dbReference>
<dbReference type="SUPFAM" id="SSF52540">
    <property type="entry name" value="P-loop containing nucleoside triphosphate hydrolases"/>
    <property type="match status" value="1"/>
</dbReference>
<dbReference type="SUPFAM" id="SSF54928">
    <property type="entry name" value="RNA-binding domain, RBD"/>
    <property type="match status" value="1"/>
</dbReference>